<name>FABP7_CAEEL</name>
<gene>
    <name type="primary">lbp-7</name>
    <name type="ORF">T22G5.2</name>
</gene>
<sequence>MASMNDFIGRWKLVQTENFDEYMKEIGVGLITRKAAAHLKPILEIRLDGETWNFDQFSTFKNTKLSFKLGEEFVENSPDDRTYNSLFTFENGKLTHRQNKIKENHKSSVLTTWLENGKLIQTYQSGDVICRREWERE</sequence>
<dbReference type="EMBL" id="Z81127">
    <property type="protein sequence ID" value="CAB03387.1"/>
    <property type="molecule type" value="Genomic_DNA"/>
</dbReference>
<dbReference type="PIR" id="T25123">
    <property type="entry name" value="T25123"/>
</dbReference>
<dbReference type="RefSeq" id="NP_506440.1">
    <property type="nucleotide sequence ID" value="NM_074039.2"/>
</dbReference>
<dbReference type="SMR" id="O02323"/>
<dbReference type="BioGRID" id="56199">
    <property type="interactions" value="18"/>
</dbReference>
<dbReference type="DIP" id="DIP-26392N"/>
<dbReference type="FunCoup" id="O02323">
    <property type="interactions" value="193"/>
</dbReference>
<dbReference type="IntAct" id="O02323">
    <property type="interactions" value="1"/>
</dbReference>
<dbReference type="STRING" id="6239.T22G5.2.1"/>
<dbReference type="PaxDb" id="6239-T22G5.2"/>
<dbReference type="PeptideAtlas" id="O02323"/>
<dbReference type="EnsemblMetazoa" id="T22G5.2.1">
    <property type="protein sequence ID" value="T22G5.2.1"/>
    <property type="gene ID" value="WBGene00002259"/>
</dbReference>
<dbReference type="GeneID" id="191701"/>
<dbReference type="KEGG" id="cel:CELE_T22G5.2"/>
<dbReference type="UCSC" id="T22G5.2">
    <property type="organism name" value="c. elegans"/>
</dbReference>
<dbReference type="AGR" id="WB:WBGene00002259"/>
<dbReference type="CTD" id="191701"/>
<dbReference type="WormBase" id="T22G5.2">
    <property type="protein sequence ID" value="CE13984"/>
    <property type="gene ID" value="WBGene00002259"/>
    <property type="gene designation" value="lbp-7"/>
</dbReference>
<dbReference type="eggNOG" id="KOG4015">
    <property type="taxonomic scope" value="Eukaryota"/>
</dbReference>
<dbReference type="GeneTree" id="ENSGT00970000196311"/>
<dbReference type="HOGENOM" id="CLU_113772_0_1_1"/>
<dbReference type="InParanoid" id="O02323"/>
<dbReference type="OMA" id="FGNVVCT"/>
<dbReference type="OrthoDB" id="354351at2759"/>
<dbReference type="PhylomeDB" id="O02323"/>
<dbReference type="Reactome" id="R-CEL-159418">
    <property type="pathway name" value="Recycling of bile acids and salts"/>
</dbReference>
<dbReference type="Reactome" id="R-CEL-163560">
    <property type="pathway name" value="Triglyceride catabolism"/>
</dbReference>
<dbReference type="Reactome" id="R-CEL-189483">
    <property type="pathway name" value="Heme degradation"/>
</dbReference>
<dbReference type="Reactome" id="R-CEL-2453902">
    <property type="pathway name" value="The canonical retinoid cycle in rods (twilight vision)"/>
</dbReference>
<dbReference type="Reactome" id="R-CEL-5362517">
    <property type="pathway name" value="Signaling by Retinoic Acid"/>
</dbReference>
<dbReference type="Reactome" id="R-CEL-975634">
    <property type="pathway name" value="Retinoid metabolism and transport"/>
</dbReference>
<dbReference type="PRO" id="PR:O02323"/>
<dbReference type="Proteomes" id="UP000001940">
    <property type="component" value="Chromosome V"/>
</dbReference>
<dbReference type="Bgee" id="WBGene00002259">
    <property type="expression patterns" value="Expressed in larva and 4 other cell types or tissues"/>
</dbReference>
<dbReference type="GO" id="GO:0005829">
    <property type="term" value="C:cytosol"/>
    <property type="evidence" value="ECO:0000318"/>
    <property type="project" value="GO_Central"/>
</dbReference>
<dbReference type="GO" id="GO:0005634">
    <property type="term" value="C:nucleus"/>
    <property type="evidence" value="ECO:0000318"/>
    <property type="project" value="GO_Central"/>
</dbReference>
<dbReference type="GO" id="GO:0005504">
    <property type="term" value="F:fatty acid binding"/>
    <property type="evidence" value="ECO:0000318"/>
    <property type="project" value="GO_Central"/>
</dbReference>
<dbReference type="GO" id="GO:0015908">
    <property type="term" value="P:fatty acid transport"/>
    <property type="evidence" value="ECO:0000318"/>
    <property type="project" value="GO_Central"/>
</dbReference>
<dbReference type="CDD" id="cd00742">
    <property type="entry name" value="FABP"/>
    <property type="match status" value="1"/>
</dbReference>
<dbReference type="FunFam" id="2.40.128.20:FF:000001">
    <property type="entry name" value="Fatty acid-binding protein, adipocyte"/>
    <property type="match status" value="1"/>
</dbReference>
<dbReference type="Gene3D" id="2.40.128.20">
    <property type="match status" value="1"/>
</dbReference>
<dbReference type="InterPro" id="IPR012674">
    <property type="entry name" value="Calycin"/>
</dbReference>
<dbReference type="InterPro" id="IPR000463">
    <property type="entry name" value="Fatty_acid-bd"/>
</dbReference>
<dbReference type="InterPro" id="IPR031259">
    <property type="entry name" value="ILBP"/>
</dbReference>
<dbReference type="InterPro" id="IPR000566">
    <property type="entry name" value="Lipocln_cytosolic_FA-bd_dom"/>
</dbReference>
<dbReference type="PANTHER" id="PTHR11955">
    <property type="entry name" value="FATTY ACID BINDING PROTEIN"/>
    <property type="match status" value="1"/>
</dbReference>
<dbReference type="Pfam" id="PF00061">
    <property type="entry name" value="Lipocalin"/>
    <property type="match status" value="1"/>
</dbReference>
<dbReference type="PRINTS" id="PR00178">
    <property type="entry name" value="FATTYACIDBP"/>
</dbReference>
<dbReference type="SUPFAM" id="SSF50814">
    <property type="entry name" value="Lipocalins"/>
    <property type="match status" value="1"/>
</dbReference>
<dbReference type="PROSITE" id="PS00214">
    <property type="entry name" value="FABP"/>
    <property type="match status" value="1"/>
</dbReference>
<reference key="1">
    <citation type="journal article" date="1998" name="Science">
        <title>Genome sequence of the nematode C. elegans: a platform for investigating biology.</title>
        <authorList>
            <consortium name="The C. elegans sequencing consortium"/>
        </authorList>
    </citation>
    <scope>NUCLEOTIDE SEQUENCE [LARGE SCALE GENOMIC DNA]</scope>
    <source>
        <strain>Bristol N2</strain>
    </source>
</reference>
<protein>
    <recommendedName>
        <fullName>Fatty acid-binding protein homolog 7</fullName>
    </recommendedName>
</protein>
<proteinExistence type="inferred from homology"/>
<accession>O02323</accession>
<evidence type="ECO:0000305" key="1"/>
<feature type="chain" id="PRO_0000067425" description="Fatty acid-binding protein homolog 7">
    <location>
        <begin position="1"/>
        <end position="137"/>
    </location>
</feature>
<comment type="similarity">
    <text evidence="1">Belongs to the calycin superfamily. Fatty-acid binding protein (FABP) family.</text>
</comment>
<keyword id="KW-0446">Lipid-binding</keyword>
<keyword id="KW-1185">Reference proteome</keyword>
<keyword id="KW-0813">Transport</keyword>
<organism>
    <name type="scientific">Caenorhabditis elegans</name>
    <dbReference type="NCBI Taxonomy" id="6239"/>
    <lineage>
        <taxon>Eukaryota</taxon>
        <taxon>Metazoa</taxon>
        <taxon>Ecdysozoa</taxon>
        <taxon>Nematoda</taxon>
        <taxon>Chromadorea</taxon>
        <taxon>Rhabditida</taxon>
        <taxon>Rhabditina</taxon>
        <taxon>Rhabditomorpha</taxon>
        <taxon>Rhabditoidea</taxon>
        <taxon>Rhabditidae</taxon>
        <taxon>Peloderinae</taxon>
        <taxon>Caenorhabditis</taxon>
    </lineage>
</organism>